<accession>A0A0P0ZBS7</accession>
<dbReference type="EC" id="4.2.1.113" evidence="2"/>
<dbReference type="EC" id="5.1.1.-" evidence="3"/>
<dbReference type="EMBL" id="LC090555">
    <property type="protein sequence ID" value="BAT31602.1"/>
    <property type="molecule type" value="Genomic_DNA"/>
</dbReference>
<dbReference type="SMR" id="A0A0P0ZBS7"/>
<dbReference type="UniPathway" id="UPA00079"/>
<dbReference type="UniPathway" id="UPA01057">
    <property type="reaction ID" value="UER00165"/>
</dbReference>
<dbReference type="GO" id="GO:0016853">
    <property type="term" value="F:isomerase activity"/>
    <property type="evidence" value="ECO:0007669"/>
    <property type="project" value="UniProtKB-KW"/>
</dbReference>
<dbReference type="GO" id="GO:0000287">
    <property type="term" value="F:magnesium ion binding"/>
    <property type="evidence" value="ECO:0007669"/>
    <property type="project" value="UniProtKB-UniRule"/>
</dbReference>
<dbReference type="GO" id="GO:0043748">
    <property type="term" value="F:O-succinylbenzoate synthase activity"/>
    <property type="evidence" value="ECO:0007669"/>
    <property type="project" value="UniProtKB-EC"/>
</dbReference>
<dbReference type="GO" id="GO:0009234">
    <property type="term" value="P:menaquinone biosynthetic process"/>
    <property type="evidence" value="ECO:0007669"/>
    <property type="project" value="UniProtKB-UniRule"/>
</dbReference>
<dbReference type="CDD" id="cd03317">
    <property type="entry name" value="NAAAR"/>
    <property type="match status" value="1"/>
</dbReference>
<dbReference type="Gene3D" id="3.20.20.120">
    <property type="entry name" value="Enolase-like C-terminal domain"/>
    <property type="match status" value="1"/>
</dbReference>
<dbReference type="Gene3D" id="3.30.390.10">
    <property type="entry name" value="Enolase-like, N-terminal domain"/>
    <property type="match status" value="1"/>
</dbReference>
<dbReference type="HAMAP" id="MF_01933">
    <property type="entry name" value="MenC_2"/>
    <property type="match status" value="1"/>
</dbReference>
<dbReference type="InterPro" id="IPR036849">
    <property type="entry name" value="Enolase-like_C_sf"/>
</dbReference>
<dbReference type="InterPro" id="IPR029017">
    <property type="entry name" value="Enolase-like_N"/>
</dbReference>
<dbReference type="InterPro" id="IPR029065">
    <property type="entry name" value="Enolase_C-like"/>
</dbReference>
<dbReference type="InterPro" id="IPR013342">
    <property type="entry name" value="Mandelate_racemase_C"/>
</dbReference>
<dbReference type="InterPro" id="IPR013341">
    <property type="entry name" value="Mandelate_racemase_N_dom"/>
</dbReference>
<dbReference type="InterPro" id="IPR047585">
    <property type="entry name" value="MenC"/>
</dbReference>
<dbReference type="InterPro" id="IPR010197">
    <property type="entry name" value="OSBS/NAAAR"/>
</dbReference>
<dbReference type="NCBIfam" id="TIGR01928">
    <property type="entry name" value="menC_lowGC_arch"/>
    <property type="match status" value="1"/>
</dbReference>
<dbReference type="PANTHER" id="PTHR48073:SF5">
    <property type="entry name" value="O-SUCCINYLBENZOATE SYNTHASE"/>
    <property type="match status" value="1"/>
</dbReference>
<dbReference type="PANTHER" id="PTHR48073">
    <property type="entry name" value="O-SUCCINYLBENZOATE SYNTHASE-RELATED"/>
    <property type="match status" value="1"/>
</dbReference>
<dbReference type="Pfam" id="PF13378">
    <property type="entry name" value="MR_MLE_C"/>
    <property type="match status" value="1"/>
</dbReference>
<dbReference type="Pfam" id="PF02746">
    <property type="entry name" value="MR_MLE_N"/>
    <property type="match status" value="1"/>
</dbReference>
<dbReference type="SFLD" id="SFLDG00180">
    <property type="entry name" value="muconate_cycloisomerase"/>
    <property type="match status" value="1"/>
</dbReference>
<dbReference type="SFLD" id="SFLDF00009">
    <property type="entry name" value="o-succinylbenzoate_synthase"/>
    <property type="match status" value="1"/>
</dbReference>
<dbReference type="SMART" id="SM00922">
    <property type="entry name" value="MR_MLE"/>
    <property type="match status" value="1"/>
</dbReference>
<dbReference type="SUPFAM" id="SSF51604">
    <property type="entry name" value="Enolase C-terminal domain-like"/>
    <property type="match status" value="1"/>
</dbReference>
<dbReference type="SUPFAM" id="SSF54826">
    <property type="entry name" value="Enolase N-terminal domain-like"/>
    <property type="match status" value="1"/>
</dbReference>
<reference key="1">
    <citation type="submission" date="2015-10" db="EMBL/GenBank/DDBJ databases">
        <title>Identification and characterization of D-succinylase, and a proposed enzymatic method for D-amino acid synthesis.</title>
        <authorList>
            <person name="Sumida Y."/>
            <person name="Iwai S."/>
            <person name="Nishiya Y."/>
            <person name="Kumagai S."/>
            <person name="Yamada H."/>
            <person name="Azuma M."/>
        </authorList>
    </citation>
    <scope>NUCLEOTIDE SEQUENCE [GENOMIC DNA]</scope>
    <source>
        <strain>ATCC 29609 / DSM 2027 / NCA 1503 / NCIMB 8924</strain>
    </source>
</reference>
<reference key="2">
    <citation type="journal article" date="2015" name="Mol. Biotechnol.">
        <title>Biochemical and mutational characterization of N-succinyl-amino acid racemase from Geobacillus stearothermophilus CECT49.</title>
        <authorList>
            <person name="Soriano-Maldonado P."/>
            <person name="Andujar-Sanchez M."/>
            <person name="Clemente-Jimenez J.M."/>
            <person name="Rodriguez-Vico F."/>
            <person name="Las Heras-Vazquez F.J."/>
            <person name="Martinez-Rodriguez S."/>
        </authorList>
    </citation>
    <scope>FUNCTION</scope>
    <scope>CATALYTIC ACTIVITY</scope>
    <scope>COFACTOR</scope>
    <scope>BIOPHYSICOCHEMICAL PROPERTIES</scope>
    <scope>SUBUNIT</scope>
    <scope>MUTAGENESIS OF LYS-166; ASP-191; GLU-216; ASP-241 AND LYS-265</scope>
    <source>
        <strain>CECT49</strain>
    </source>
</reference>
<organism>
    <name type="scientific">Geobacillus stearothermophilus</name>
    <name type="common">Bacillus stearothermophilus</name>
    <dbReference type="NCBI Taxonomy" id="1422"/>
    <lineage>
        <taxon>Bacteria</taxon>
        <taxon>Bacillati</taxon>
        <taxon>Bacillota</taxon>
        <taxon>Bacilli</taxon>
        <taxon>Bacillales</taxon>
        <taxon>Anoxybacillaceae</taxon>
        <taxon>Geobacillus</taxon>
    </lineage>
</organism>
<sequence>MAINIEYVILRHLQMELKAPFTTSFGTFQRKELILVEVVDRDGVSGWGESVAFSAPWYSEETVKTNWHMLEDFLVPLALAEPIHHPEELSKRFSAIRQNNMAKAALEGAVWDLYAKRLGVPLSQALGGAKKDIEVGVSIGIQPTVADLLQVIERYVAQGYRRIKVKIKPSWDVDVIREVRRVFPDVPLMADANSAYTLVDADRLKALDEFGLLMIEQPLAADDLVDHARLQPLLQTPICLDESIRSYDDARKALDLGSCRIINIKIGRVGGLGEAKRIHDLCAERGAPVWCGGMLEAGVGRAHNIAITTLENFTLPGDTAASSHYWERDIITPEVEVHGGLIRVPDAPGIGYDVDRRQVERYTQFAKVFHRTATA</sequence>
<gene>
    <name evidence="2" type="primary">menC</name>
    <name evidence="6" type="synonym">NSAR</name>
</gene>
<name>MENC_GEOSE</name>
<protein>
    <recommendedName>
        <fullName evidence="2">o-succinylbenzoate synthase</fullName>
        <shortName evidence="2">OSB synthase</shortName>
        <shortName evidence="2">OSBS</shortName>
        <ecNumber evidence="2">4.2.1.113</ecNumber>
    </recommendedName>
    <alternativeName>
        <fullName evidence="2">4-(2'-carboxyphenyl)-4-oxybutyric acid synthase</fullName>
    </alternativeName>
    <alternativeName>
        <fullName evidence="5">N-acylamino acid racemase</fullName>
        <shortName evidence="5">NAAAR</shortName>
    </alternativeName>
    <alternativeName>
        <fullName evidence="4">N-succinylamino acid racemase</fullName>
        <shortName evidence="4">NSAAR</shortName>
        <shortName evidence="5">NSAR</shortName>
        <ecNumber evidence="3">5.1.1.-</ecNumber>
    </alternativeName>
    <alternativeName>
        <fullName evidence="2">o-succinylbenzoic acid synthase</fullName>
    </alternativeName>
</protein>
<feature type="chain" id="PRO_0000455099" description="o-succinylbenzoate synthase">
    <location>
        <begin position="1"/>
        <end position="375"/>
    </location>
</feature>
<feature type="active site" description="Proton donor" evidence="2">
    <location>
        <position position="166"/>
    </location>
</feature>
<feature type="active site" description="Proton acceptor" evidence="2">
    <location>
        <position position="265"/>
    </location>
</feature>
<feature type="binding site" evidence="2">
    <location>
        <position position="191"/>
    </location>
    <ligand>
        <name>Mg(2+)</name>
        <dbReference type="ChEBI" id="CHEBI:18420"/>
    </ligand>
</feature>
<feature type="binding site" evidence="2">
    <location>
        <position position="216"/>
    </location>
    <ligand>
        <name>Mg(2+)</name>
        <dbReference type="ChEBI" id="CHEBI:18420"/>
    </ligand>
</feature>
<feature type="binding site" evidence="2">
    <location>
        <position position="241"/>
    </location>
    <ligand>
        <name>Mg(2+)</name>
        <dbReference type="ChEBI" id="CHEBI:18420"/>
    </ligand>
</feature>
<feature type="mutagenesis site" description="Almost loss of activity with N-formyl-D/L-methionine." evidence="3">
    <original>K</original>
    <variation>A</variation>
    <location>
        <position position="166"/>
    </location>
</feature>
<feature type="mutagenesis site" description="Almost loss of activity with N-formyl-D/L-methionine." evidence="3">
    <original>D</original>
    <variation>A</variation>
    <location>
        <position position="191"/>
    </location>
</feature>
<feature type="mutagenesis site" description="Almost loss of activity with N-formyl-D/L-methionine." evidence="3">
    <original>E</original>
    <variation>A</variation>
    <location>
        <position position="216"/>
    </location>
</feature>
<feature type="mutagenesis site" description="Almost loss of activity with N-formyl-D/L-methionine." evidence="3">
    <original>D</original>
    <variation>A</variation>
    <location>
        <position position="241"/>
    </location>
</feature>
<feature type="mutagenesis site" description="Almost loss of activity with N-formyl-D/L-methionine." evidence="3">
    <original>K</original>
    <variation>A</variation>
    <location>
        <position position="265"/>
    </location>
</feature>
<evidence type="ECO:0000250" key="1">
    <source>
        <dbReference type="UniProtKB" id="Q5L1G9"/>
    </source>
</evidence>
<evidence type="ECO:0000255" key="2">
    <source>
        <dbReference type="HAMAP-Rule" id="MF_01933"/>
    </source>
</evidence>
<evidence type="ECO:0000269" key="3">
    <source>
    </source>
</evidence>
<evidence type="ECO:0000303" key="4">
    <source>
    </source>
</evidence>
<evidence type="ECO:0000305" key="5"/>
<evidence type="ECO:0000312" key="6">
    <source>
        <dbReference type="EMBL" id="BAT31602.1"/>
    </source>
</evidence>
<proteinExistence type="evidence at protein level"/>
<comment type="function">
    <text evidence="1 2 3">Converts 2-succinyl-6-hydroxy-2,4-cyclohexadiene-1-carboxylate (SHCHC) to 2-succinylbenzoate (OSB) (By similarity). Also acts as a N-succinylamino acid racemase (NSAR) that catalyzes the racemization of N-succinyl-D/L-phenylalanine (PubMed:25875730). Can catalyze the racemization of a broad range of N-acylamino acids, including N-acetyl-D-methionine, N-formyl-D/L-methionine, N-formyl-D/L-norleucine, N-formyl-D/L-aminobutyric acid, N-formyl-D/L-norvaline, N-formyl-D/L-homophenylalanine, N-carbamoyl-D-methionine and N-carbamoyl-D-norleucine (PubMed:25875730). May be a bifunctional enzyme involved in menaquinone biosynthesis and in an irreversible pathway for the conversion of D- to L-amino acids, thereby facilitating the survival and/or growth of the organism (By similarity).</text>
</comment>
<comment type="catalytic activity">
    <reaction evidence="2">
        <text>(1R,6R)-6-hydroxy-2-succinyl-cyclohexa-2,4-diene-1-carboxylate = 2-succinylbenzoate + H2O</text>
        <dbReference type="Rhea" id="RHEA:10196"/>
        <dbReference type="ChEBI" id="CHEBI:15377"/>
        <dbReference type="ChEBI" id="CHEBI:18325"/>
        <dbReference type="ChEBI" id="CHEBI:58689"/>
        <dbReference type="EC" id="4.2.1.113"/>
    </reaction>
</comment>
<comment type="catalytic activity">
    <reaction evidence="3">
        <text>N-acetyl-D-methionine = N-acetyl-L-methionine</text>
        <dbReference type="Rhea" id="RHEA:59960"/>
        <dbReference type="ChEBI" id="CHEBI:71670"/>
        <dbReference type="ChEBI" id="CHEBI:85220"/>
    </reaction>
</comment>
<comment type="cofactor">
    <cofactor evidence="2 3">
        <name>a divalent metal cation</name>
        <dbReference type="ChEBI" id="CHEBI:60240"/>
    </cofactor>
    <text evidence="3">Shows highest activity in vitro with Co(2+) and Ni(2+).</text>
</comment>
<comment type="biophysicochemical properties">
    <kinetics>
        <KM evidence="3">12.6 mM for N-formyl-D-methionine</KM>
        <KM evidence="3">9 mM for N-formyl-L-methionine</KM>
        <KM evidence="3">11.1 mM for N-formyl-D-norleucine</KM>
        <KM evidence="3">12.5 mM for N-formyl-L-norleucine</KM>
        <KM evidence="3">19.6 mM for N-formyl-D-aminobutyric acid</KM>
        <KM evidence="3">17.9 mM for N-formyl-L-aminobutyric acid</KM>
        <KM evidence="3">9.2 mM for N-formyl-D-norvaline</KM>
        <KM evidence="3">24.5 mM for N-formyl-L-norvaline</KM>
        <KM evidence="3">3 mM for N-formyl-D-homophenylalanine</KM>
        <KM evidence="3">5.7 mM for N-formyl-L-homophenylalanine</KM>
        <text evidence="3">kcat is 74.6 sec(-1) with N-formyl-D-methionine as substrate. kcat is 52.9 sec(-1) with N-formyl-L-methionine as substrate. kcat is 12.3 sec(-1) with N-formyl-D-norleucine as substrate. kcat is 8.0 sec(-1) with N-formyl-L-norleucine as substrate. kcat is 15.2 sec(-1) with N-formyl-D-aminobutyric acid as substrate. kcat is 11.6 sec(-1) with N-formyl-L-aminobutyric acid as substrate. kcat is 11.2 sec(-1) with N-formyl-D-norvaline as substrate. kcat is 19.6 sec(-1) with N-formyl-L-norvaline as substrate. kcat is 88.4 sec(-1) with N-formyl-D-homophenylalanine as substrate. kcat is 85.5 sec(-1) with N-formyl-L-homophenylalanine as substrate.</text>
    </kinetics>
    <phDependence>
        <text evidence="3">Optimum pH is 8.0-8.5.</text>
    </phDependence>
    <temperatureDependence>
        <text evidence="3">Optimum temperature is 55-65 degrees Celsius.</text>
    </temperatureDependence>
</comment>
<comment type="pathway">
    <text evidence="2">Quinol/quinone metabolism; 1,4-dihydroxy-2-naphthoate biosynthesis; 1,4-dihydroxy-2-naphthoate from chorismate: step 4/7.</text>
</comment>
<comment type="pathway">
    <text evidence="2">Quinol/quinone metabolism; menaquinone biosynthesis.</text>
</comment>
<comment type="subunit">
    <text evidence="3">Homotetramer.</text>
</comment>
<comment type="similarity">
    <text evidence="2">Belongs to the mandelate racemase/muconate lactonizing enzyme family. MenC type 2 subfamily.</text>
</comment>
<keyword id="KW-0413">Isomerase</keyword>
<keyword id="KW-0456">Lyase</keyword>
<keyword id="KW-0460">Magnesium</keyword>
<keyword id="KW-0474">Menaquinone biosynthesis</keyword>
<keyword id="KW-0479">Metal-binding</keyword>